<feature type="signal peptide">
    <location>
        <begin position="1"/>
        <end position="21"/>
    </location>
</feature>
<feature type="chain" id="PRO_0000041611" description="Zein-alpha A30">
    <location>
        <begin position="22"/>
        <end position="234"/>
    </location>
</feature>
<protein>
    <recommendedName>
        <fullName>Zein-alpha A30</fullName>
    </recommendedName>
    <alternativeName>
        <fullName>19 kDa zein A30</fullName>
    </alternativeName>
</protein>
<reference key="1">
    <citation type="journal article" date="1981" name="Nucleic Acids Res.">
        <title>The primary structure of a plant storage protein: zein.</title>
        <authorList>
            <person name="Geraghty D."/>
            <person name="Peifer M.A."/>
            <person name="Rubenstein I."/>
            <person name="Messing J."/>
        </authorList>
    </citation>
    <scope>NUCLEOTIDE SEQUENCE [MRNA]</scope>
</reference>
<reference key="2">
    <citation type="journal article" date="1982" name="EMBO J.">
        <title>Primary structure of a genomic zein sequence of maize.</title>
        <authorList>
            <person name="Hu N.T."/>
            <person name="Peifer M.A."/>
            <person name="Heidecker G."/>
            <person name="Messing J."/>
            <person name="Rubenstein I."/>
        </authorList>
    </citation>
    <scope>NUCLEOTIDE SEQUENCE [MRNA]</scope>
</reference>
<accession>P02859</accession>
<evidence type="ECO:0000250" key="1">
    <source>
        <dbReference type="UniProtKB" id="P04698"/>
    </source>
</evidence>
<evidence type="ECO:0000305" key="2"/>
<sequence length="234" mass="25404">MAAKIFCLLMLLGLSASAATATIFPQCSQAPIASLLPPYLSPAVSSVCENPILQPYRIQQAIAAGILPLSPLFLQQSSALLQQLPLVHLLAQNIRAQQLQQLVLANLAAYSQQQQFLPFNQLAALNSASYLQQQQLPFSQLPAAYPQQFLPFNQLAALNSPAYLQQQQLLPFSQLAGVSPATFLTQPQLLPFYQHAAPNAGTLLQLQQLLPFNQLALTNLAAFYQQPIIGGALF</sequence>
<dbReference type="EMBL" id="V01481">
    <property type="protein sequence ID" value="CAA24728.1"/>
    <property type="molecule type" value="mRNA"/>
</dbReference>
<dbReference type="PIR" id="A90967">
    <property type="entry name" value="ZIZM3"/>
</dbReference>
<dbReference type="STRING" id="4577.P02859"/>
<dbReference type="PaxDb" id="4577-GRMZM2G353268_P01"/>
<dbReference type="MaizeGDB" id="58096"/>
<dbReference type="InParanoid" id="P02859"/>
<dbReference type="Proteomes" id="UP000007305">
    <property type="component" value="Unplaced"/>
</dbReference>
<dbReference type="ExpressionAtlas" id="P02859">
    <property type="expression patterns" value="baseline and differential"/>
</dbReference>
<dbReference type="GO" id="GO:0045735">
    <property type="term" value="F:nutrient reservoir activity"/>
    <property type="evidence" value="ECO:0007669"/>
    <property type="project" value="UniProtKB-KW"/>
</dbReference>
<dbReference type="InterPro" id="IPR002530">
    <property type="entry name" value="Zein"/>
</dbReference>
<dbReference type="InterPro" id="IPR051903">
    <property type="entry name" value="Zein-alpha"/>
</dbReference>
<dbReference type="PANTHER" id="PTHR48214">
    <property type="entry name" value="ZEIN-ALPHA PMS2"/>
    <property type="match status" value="1"/>
</dbReference>
<dbReference type="PANTHER" id="PTHR48214:SF1">
    <property type="entry name" value="ZEIN-ALPHA PMS2"/>
    <property type="match status" value="1"/>
</dbReference>
<dbReference type="Pfam" id="PF01559">
    <property type="entry name" value="Zein"/>
    <property type="match status" value="2"/>
</dbReference>
<comment type="function">
    <text>Zeins are major seed storage proteins.</text>
</comment>
<comment type="miscellaneous">
    <text>The alpha zeins of 19 kDa and 22 kDa account for 70% of the total zein fraction. They are encoded by a large multigene family.</text>
</comment>
<comment type="miscellaneous">
    <text evidence="1">Structurally, 22K and 19K zeins are composed of nine adjacent, topologically antiparallel helices clustered within a distorted cylinder.</text>
</comment>
<comment type="similarity">
    <text evidence="2">Belongs to the zein family.</text>
</comment>
<organism>
    <name type="scientific">Zea mays</name>
    <name type="common">Maize</name>
    <dbReference type="NCBI Taxonomy" id="4577"/>
    <lineage>
        <taxon>Eukaryota</taxon>
        <taxon>Viridiplantae</taxon>
        <taxon>Streptophyta</taxon>
        <taxon>Embryophyta</taxon>
        <taxon>Tracheophyta</taxon>
        <taxon>Spermatophyta</taxon>
        <taxon>Magnoliopsida</taxon>
        <taxon>Liliopsida</taxon>
        <taxon>Poales</taxon>
        <taxon>Poaceae</taxon>
        <taxon>PACMAD clade</taxon>
        <taxon>Panicoideae</taxon>
        <taxon>Andropogonodae</taxon>
        <taxon>Andropogoneae</taxon>
        <taxon>Tripsacinae</taxon>
        <taxon>Zea</taxon>
    </lineage>
</organism>
<name>ZEA1_MAIZE</name>
<keyword id="KW-1185">Reference proteome</keyword>
<keyword id="KW-0677">Repeat</keyword>
<keyword id="KW-0708">Seed storage protein</keyword>
<keyword id="KW-0732">Signal</keyword>
<keyword id="KW-0758">Storage protein</keyword>
<proteinExistence type="evidence at transcript level"/>